<reference key="1">
    <citation type="journal article" date="1997" name="Cell">
        <title>Identification of the Abl- and rasGAP-associated 62 kDa protein as a docking protein, Dok.</title>
        <authorList>
            <person name="Yamanashi Y."/>
            <person name="Baltimore D."/>
        </authorList>
    </citation>
    <scope>NUCLEOTIDE SEQUENCE [MRNA]</scope>
    <scope>PROTEIN SEQUENCE OF 25-46; 122-160; 257-276 AND 424-453</scope>
    <source>
        <strain>C57BL/6J</strain>
        <tissue>B-cell</tissue>
        <tissue>Spleen</tissue>
    </source>
</reference>
<reference key="2">
    <citation type="submission" date="2002-05" db="EMBL/GenBank/DDBJ databases">
        <authorList>
            <person name="Yamanashi Y."/>
            <person name="Baltimore D."/>
        </authorList>
    </citation>
    <scope>SEQUENCE REVISION TO 381 AND 384</scope>
</reference>
<reference key="3">
    <citation type="journal article" date="1999" name="Genome Res.">
        <title>Comparative sequence of human and mouse BAC clones from the mnd2 region of chromosome 2p13.</title>
        <authorList>
            <person name="Jang W."/>
            <person name="Hua A."/>
            <person name="Spilson S.V."/>
            <person name="Miller W."/>
            <person name="Roe B.A."/>
            <person name="Meisler M.H."/>
        </authorList>
    </citation>
    <scope>NUCLEOTIDE SEQUENCE [GENOMIC DNA]</scope>
    <source>
        <strain>129/SvJ</strain>
    </source>
</reference>
<reference key="4">
    <citation type="journal article" date="2004" name="Genome Res.">
        <title>The status, quality, and expansion of the NIH full-length cDNA project: the Mammalian Gene Collection (MGC).</title>
        <authorList>
            <consortium name="The MGC Project Team"/>
        </authorList>
    </citation>
    <scope>NUCLEOTIDE SEQUENCE [LARGE SCALE MRNA]</scope>
</reference>
<reference key="5">
    <citation type="journal article" date="1999" name="J. Biol. Chem.">
        <title>The role of Tec protein-tyrosine kinase in T cell signaling.</title>
        <authorList>
            <person name="Yang W.C."/>
            <person name="Ghiotto M."/>
            <person name="Barbarat B."/>
            <person name="Olive D."/>
        </authorList>
    </citation>
    <scope>PHOSPHORYLATION BY TEC</scope>
</reference>
<reference key="6">
    <citation type="journal article" date="2000" name="Cell. Signal.">
        <title>The phosphatidylinositol polyphosphate 5-phosphatase SHIP1 associates with the dok1 phosphoprotein in bcr-Abl transformed cells.</title>
        <authorList>
            <person name="Dunant N.M."/>
            <person name="Wisniewski D."/>
            <person name="Strife A."/>
            <person name="Clarkson B."/>
            <person name="Resh M.D."/>
        </authorList>
    </citation>
    <scope>INTERACTION WITH INPP5D</scope>
</reference>
<reference key="7">
    <citation type="journal article" date="2000" name="Genes Dev.">
        <title>Role of the rasGAP-associated docking protein p62(dok) in negative regulation of B cell receptor-mediated signaling.</title>
        <authorList>
            <person name="Yamanashi Y."/>
            <person name="Tamura T."/>
            <person name="Kanamori T."/>
            <person name="Yamane H."/>
            <person name="Nariuchi H."/>
            <person name="Yamamoto T."/>
            <person name="Baltimore D."/>
        </authorList>
    </citation>
    <scope>DISRUPTION PHENOTYPE</scope>
    <scope>PHOSPHORYLATION BY LYN</scope>
</reference>
<reference key="8">
    <citation type="journal article" date="2001" name="J. Biol. Chem.">
        <title>SHIP1, an SH2 domain containing polyinositol-5-phosphatase, regulates migration through two critical tyrosine residues and forms a novel signaling complex with DOK1 and CRKL.</title>
        <authorList>
            <person name="Sattler M."/>
            <person name="Verma S."/>
            <person name="Pride Y.B."/>
            <person name="Salgia R."/>
            <person name="Rohrschneider L.R."/>
            <person name="Griffin J.D."/>
        </authorList>
    </citation>
    <scope>INTERACTION WITH INPP5D</scope>
</reference>
<reference key="9">
    <citation type="journal article" date="2004" name="Acta Crystallogr. D">
        <title>Expression, crystallization and preliminary X-ray studies of the recombinant PTB domain of mouse dok1 protein.</title>
        <authorList>
            <person name="Shi N."/>
            <person name="Liu Y."/>
            <person name="Ni M."/>
            <person name="Yang M."/>
            <person name="Wu J."/>
            <person name="Peng Y."/>
            <person name="Gao F."/>
            <person name="Sun F."/>
            <person name="Peng X."/>
            <person name="Qiang B."/>
            <person name="Rao Z."/>
            <person name="Yuan J."/>
        </authorList>
    </citation>
    <scope>CRYSTALLIZATION</scope>
</reference>
<reference key="10">
    <citation type="journal article" date="2005" name="Nat. Biotechnol.">
        <title>Immunoaffinity profiling of tyrosine phosphorylation in cancer cells.</title>
        <authorList>
            <person name="Rush J."/>
            <person name="Moritz A."/>
            <person name="Lee K.A."/>
            <person name="Guo A."/>
            <person name="Goss V.L."/>
            <person name="Spek E.J."/>
            <person name="Zhang H."/>
            <person name="Zha X.-M."/>
            <person name="Polakiewicz R.D."/>
            <person name="Comb M.J."/>
        </authorList>
    </citation>
    <scope>PHOSPHORYLATION [LARGE SCALE ANALYSIS] AT TYR-295; TYR-336; TYR-340 AND TYR-361</scope>
    <scope>IDENTIFICATION BY MASS SPECTROMETRY [LARGE SCALE ANALYSIS]</scope>
</reference>
<reference key="11">
    <citation type="journal article" date="2007" name="J. Immunol.">
        <title>Quantitative time-resolved phosphoproteomic analysis of mast cell signaling.</title>
        <authorList>
            <person name="Cao L."/>
            <person name="Yu K."/>
            <person name="Banh C."/>
            <person name="Nguyen V."/>
            <person name="Ritz A."/>
            <person name="Raphael B.J."/>
            <person name="Kawakami Y."/>
            <person name="Kawakami T."/>
            <person name="Salomon A.R."/>
        </authorList>
    </citation>
    <scope>PHOSPHORYLATION [LARGE SCALE ANALYSIS] AT TYR-361; TYR-408 AND TYR-450</scope>
    <scope>IDENTIFICATION BY MASS SPECTROMETRY [LARGE SCALE ANALYSIS]</scope>
    <source>
        <tissue>Mast cell</tissue>
    </source>
</reference>
<reference key="12">
    <citation type="journal article" date="2009" name="Immunity">
        <title>The phagosomal proteome in interferon-gamma-activated macrophages.</title>
        <authorList>
            <person name="Trost M."/>
            <person name="English L."/>
            <person name="Lemieux S."/>
            <person name="Courcelles M."/>
            <person name="Desjardins M."/>
            <person name="Thibault P."/>
        </authorList>
    </citation>
    <scope>PHOSPHORYLATION [LARGE SCALE ANALYSIS] AT TYR-376</scope>
    <scope>IDENTIFICATION BY MASS SPECTROMETRY [LARGE SCALE ANALYSIS]</scope>
</reference>
<reference key="13">
    <citation type="journal article" date="2009" name="Mol. Cell. Proteomics">
        <title>Large scale localization of protein phosphorylation by use of electron capture dissociation mass spectrometry.</title>
        <authorList>
            <person name="Sweet S.M."/>
            <person name="Bailey C.M."/>
            <person name="Cunningham D.L."/>
            <person name="Heath J.K."/>
            <person name="Cooper H.J."/>
        </authorList>
    </citation>
    <scope>PHOSPHORYLATION [LARGE SCALE ANALYSIS] AT SER-269 AND TYR-450</scope>
    <scope>IDENTIFICATION BY MASS SPECTROMETRY [LARGE SCALE ANALYSIS]</scope>
    <source>
        <tissue>Embryonic fibroblast</tissue>
    </source>
</reference>
<reference key="14">
    <citation type="journal article" date="2010" name="Cell">
        <title>A tissue-specific atlas of mouse protein phosphorylation and expression.</title>
        <authorList>
            <person name="Huttlin E.L."/>
            <person name="Jedrychowski M.P."/>
            <person name="Elias J.E."/>
            <person name="Goswami T."/>
            <person name="Rad R."/>
            <person name="Beausoleil S.A."/>
            <person name="Villen J."/>
            <person name="Haas W."/>
            <person name="Sowa M.E."/>
            <person name="Gygi S.P."/>
        </authorList>
    </citation>
    <scope>PHOSPHORYLATION [LARGE SCALE ANALYSIS] AT SER-415</scope>
    <scope>IDENTIFICATION BY MASS SPECTROMETRY [LARGE SCALE ANALYSIS]</scope>
    <source>
        <tissue>Lung</tissue>
        <tissue>Spleen</tissue>
    </source>
</reference>
<reference key="15">
    <citation type="journal article" date="2004" name="J. Biol. Chem.">
        <title>Structural basis for the specific recognition of RET by the Dok1 phosphotyrosine binding domain.</title>
        <authorList>
            <person name="Shi N."/>
            <person name="Ye S."/>
            <person name="Bartlam M."/>
            <person name="Yang M."/>
            <person name="Wu J."/>
            <person name="Liu Y."/>
            <person name="Sun F."/>
            <person name="Han X."/>
            <person name="Peng X."/>
            <person name="Qiang B."/>
            <person name="Yuan J."/>
            <person name="Rao Z."/>
        </authorList>
    </citation>
    <scope>X-RAY CRYSTALLOGRAPHY (2.35 ANGSTROMS) OF 152-266</scope>
</reference>
<feature type="chain" id="PRO_0000187269" description="Docking protein 1">
    <location>
        <begin position="1"/>
        <end position="482"/>
    </location>
</feature>
<feature type="domain" description="PH">
    <location>
        <begin position="4"/>
        <end position="119"/>
    </location>
</feature>
<feature type="domain" description="IRS-type PTB" evidence="3">
    <location>
        <begin position="151"/>
        <end position="259"/>
    </location>
</feature>
<feature type="region of interest" description="Disordered" evidence="4">
    <location>
        <begin position="269"/>
        <end position="328"/>
    </location>
</feature>
<feature type="region of interest" description="Disordered" evidence="4">
    <location>
        <begin position="353"/>
        <end position="373"/>
    </location>
</feature>
<feature type="region of interest" description="Disordered" evidence="4">
    <location>
        <begin position="398"/>
        <end position="482"/>
    </location>
</feature>
<feature type="compositionally biased region" description="Pro residues" evidence="4">
    <location>
        <begin position="410"/>
        <end position="423"/>
    </location>
</feature>
<feature type="compositionally biased region" description="Polar residues" evidence="4">
    <location>
        <begin position="432"/>
        <end position="459"/>
    </location>
</feature>
<feature type="modified residue" description="N-acetylmethionine" evidence="2">
    <location>
        <position position="1"/>
    </location>
</feature>
<feature type="modified residue" description="Phosphoserine" evidence="2">
    <location>
        <position position="48"/>
    </location>
</feature>
<feature type="modified residue" description="Phosphoserine" evidence="9">
    <location>
        <position position="269"/>
    </location>
</feature>
<feature type="modified residue" description="Phosphoserine" evidence="2">
    <location>
        <position position="290"/>
    </location>
</feature>
<feature type="modified residue" description="Phosphotyrosine" evidence="7">
    <location>
        <position position="295"/>
    </location>
</feature>
<feature type="modified residue" description="Phosphotyrosine" evidence="7">
    <location>
        <position position="336"/>
    </location>
</feature>
<feature type="modified residue" description="Phosphotyrosine" evidence="7">
    <location>
        <position position="340"/>
    </location>
</feature>
<feature type="modified residue" description="Phosphotyrosine" evidence="7 8">
    <location>
        <position position="361"/>
    </location>
</feature>
<feature type="modified residue" description="Phosphotyrosine" evidence="10">
    <location>
        <position position="376"/>
    </location>
</feature>
<feature type="modified residue" description="Phosphotyrosine; by INSR" evidence="2">
    <location>
        <position position="397"/>
    </location>
</feature>
<feature type="modified residue" description="Phosphotyrosine" evidence="8">
    <location>
        <position position="408"/>
    </location>
</feature>
<feature type="modified residue" description="Phosphoserine" evidence="11">
    <location>
        <position position="415"/>
    </location>
</feature>
<feature type="modified residue" description="Phosphotyrosine" evidence="8 9">
    <location>
        <position position="450"/>
    </location>
</feature>
<feature type="sequence conflict" description="In Ref. 4; AAH13066." evidence="6" ref="4">
    <original>D</original>
    <variation>N</variation>
    <location>
        <position position="2"/>
    </location>
</feature>
<feature type="sequence conflict" description="In Ref. 3; AAC95339 and 4; AAH13066." evidence="6" ref="3 4">
    <original>V</original>
    <variation>A</variation>
    <location>
        <position position="87"/>
    </location>
</feature>
<feature type="strand" evidence="12">
    <location>
        <begin position="153"/>
        <end position="160"/>
    </location>
</feature>
<feature type="helix" evidence="12">
    <location>
        <begin position="163"/>
        <end position="167"/>
    </location>
</feature>
<feature type="strand" evidence="12">
    <location>
        <begin position="172"/>
        <end position="178"/>
    </location>
</feature>
<feature type="strand" evidence="12">
    <location>
        <begin position="180"/>
        <end position="188"/>
    </location>
</feature>
<feature type="turn" evidence="12">
    <location>
        <begin position="190"/>
        <end position="192"/>
    </location>
</feature>
<feature type="strand" evidence="12">
    <location>
        <begin position="194"/>
        <end position="202"/>
    </location>
</feature>
<feature type="helix" evidence="12">
    <location>
        <begin position="203"/>
        <end position="205"/>
    </location>
</feature>
<feature type="strand" evidence="12">
    <location>
        <begin position="206"/>
        <end position="211"/>
    </location>
</feature>
<feature type="strand" evidence="12">
    <location>
        <begin position="213"/>
        <end position="220"/>
    </location>
</feature>
<feature type="strand" evidence="12">
    <location>
        <begin position="228"/>
        <end position="234"/>
    </location>
</feature>
<feature type="helix" evidence="12">
    <location>
        <begin position="238"/>
        <end position="253"/>
    </location>
</feature>
<dbReference type="EMBL" id="U78818">
    <property type="protein sequence ID" value="AAB48827.2"/>
    <property type="molecule type" value="mRNA"/>
</dbReference>
<dbReference type="EMBL" id="AF084363">
    <property type="protein sequence ID" value="AAC95339.1"/>
    <property type="molecule type" value="Genomic_DNA"/>
</dbReference>
<dbReference type="EMBL" id="BC013066">
    <property type="protein sequence ID" value="AAH13066.1"/>
    <property type="molecule type" value="mRNA"/>
</dbReference>
<dbReference type="CCDS" id="CCDS20265.1"/>
<dbReference type="RefSeq" id="NP_001278728.1">
    <property type="nucleotide sequence ID" value="NM_001291799.1"/>
</dbReference>
<dbReference type="RefSeq" id="NP_034200.4">
    <property type="nucleotide sequence ID" value="NM_010070.4"/>
</dbReference>
<dbReference type="PDB" id="1P5T">
    <property type="method" value="X-ray"/>
    <property type="resolution" value="2.35 A"/>
    <property type="chains" value="A/B=152-266"/>
</dbReference>
<dbReference type="PDB" id="1UEF">
    <property type="method" value="X-ray"/>
    <property type="resolution" value="2.50 A"/>
    <property type="chains" value="A/B=152-266"/>
</dbReference>
<dbReference type="PDBsum" id="1P5T"/>
<dbReference type="PDBsum" id="1UEF"/>
<dbReference type="SMR" id="P97465"/>
<dbReference type="BioGRID" id="199267">
    <property type="interactions" value="35"/>
</dbReference>
<dbReference type="CORUM" id="P97465"/>
<dbReference type="FunCoup" id="P97465">
    <property type="interactions" value="1607"/>
</dbReference>
<dbReference type="IntAct" id="P97465">
    <property type="interactions" value="13"/>
</dbReference>
<dbReference type="MINT" id="P97465"/>
<dbReference type="STRING" id="10090.ENSMUSP00000087079"/>
<dbReference type="GlyGen" id="P97465">
    <property type="glycosylation" value="1 site"/>
</dbReference>
<dbReference type="iPTMnet" id="P97465"/>
<dbReference type="PhosphoSitePlus" id="P97465"/>
<dbReference type="jPOST" id="P97465"/>
<dbReference type="PaxDb" id="10090-ENSMUSP00000087079"/>
<dbReference type="PeptideAtlas" id="P97465"/>
<dbReference type="ProteomicsDB" id="279468"/>
<dbReference type="Pumba" id="P97465"/>
<dbReference type="Antibodypedia" id="3784">
    <property type="antibodies" value="880 antibodies from 42 providers"/>
</dbReference>
<dbReference type="DNASU" id="13448"/>
<dbReference type="Ensembl" id="ENSMUST00000089651.6">
    <property type="protein sequence ID" value="ENSMUSP00000087079.6"/>
    <property type="gene ID" value="ENSMUSG00000068335.7"/>
</dbReference>
<dbReference type="GeneID" id="13448"/>
<dbReference type="KEGG" id="mmu:13448"/>
<dbReference type="UCSC" id="uc009clr.2">
    <property type="organism name" value="mouse"/>
</dbReference>
<dbReference type="AGR" id="MGI:893587"/>
<dbReference type="CTD" id="1796"/>
<dbReference type="MGI" id="MGI:893587">
    <property type="gene designation" value="Dok1"/>
</dbReference>
<dbReference type="VEuPathDB" id="HostDB:ENSMUSG00000068335"/>
<dbReference type="eggNOG" id="KOG4047">
    <property type="taxonomic scope" value="Eukaryota"/>
</dbReference>
<dbReference type="GeneTree" id="ENSGT00940000155980"/>
<dbReference type="HOGENOM" id="CLU_030101_3_1_1"/>
<dbReference type="InParanoid" id="P97465"/>
<dbReference type="OMA" id="EFFDCKE"/>
<dbReference type="OrthoDB" id="6243387at2759"/>
<dbReference type="PhylomeDB" id="P97465"/>
<dbReference type="TreeFam" id="TF324994"/>
<dbReference type="Reactome" id="R-MMU-8849469">
    <property type="pathway name" value="PTK6 Regulates RTKs and Their Effectors AKT1 and DOK1"/>
</dbReference>
<dbReference type="Reactome" id="R-MMU-8853659">
    <property type="pathway name" value="RET signaling"/>
</dbReference>
<dbReference type="BioGRID-ORCS" id="13448">
    <property type="hits" value="3 hits in 81 CRISPR screens"/>
</dbReference>
<dbReference type="ChiTaRS" id="Dok1">
    <property type="organism name" value="mouse"/>
</dbReference>
<dbReference type="EvolutionaryTrace" id="P97465"/>
<dbReference type="PRO" id="PR:P97465"/>
<dbReference type="Proteomes" id="UP000000589">
    <property type="component" value="Chromosome 6"/>
</dbReference>
<dbReference type="RNAct" id="P97465">
    <property type="molecule type" value="protein"/>
</dbReference>
<dbReference type="Bgee" id="ENSMUSG00000068335">
    <property type="expression patterns" value="Expressed in stroma of bone marrow and 160 other cell types or tissues"/>
</dbReference>
<dbReference type="ExpressionAtlas" id="P97465">
    <property type="expression patterns" value="baseline and differential"/>
</dbReference>
<dbReference type="GO" id="GO:0005829">
    <property type="term" value="C:cytosol"/>
    <property type="evidence" value="ECO:0007669"/>
    <property type="project" value="Ensembl"/>
</dbReference>
<dbReference type="GO" id="GO:0005634">
    <property type="term" value="C:nucleus"/>
    <property type="evidence" value="ECO:0000250"/>
    <property type="project" value="UniProtKB"/>
</dbReference>
<dbReference type="GO" id="GO:0007169">
    <property type="term" value="P:cell surface receptor protein tyrosine kinase signaling pathway"/>
    <property type="evidence" value="ECO:0000353"/>
    <property type="project" value="MGI"/>
</dbReference>
<dbReference type="GO" id="GO:0035556">
    <property type="term" value="P:intracellular signal transduction"/>
    <property type="evidence" value="ECO:0000353"/>
    <property type="project" value="MGI"/>
</dbReference>
<dbReference type="GO" id="GO:0038145">
    <property type="term" value="P:macrophage colony-stimulating factor signaling pathway"/>
    <property type="evidence" value="ECO:0000353"/>
    <property type="project" value="MGI"/>
</dbReference>
<dbReference type="GO" id="GO:0043409">
    <property type="term" value="P:negative regulation of MAPK cascade"/>
    <property type="evidence" value="ECO:0000304"/>
    <property type="project" value="MGI"/>
</dbReference>
<dbReference type="GO" id="GO:0007265">
    <property type="term" value="P:Ras protein signal transduction"/>
    <property type="evidence" value="ECO:0000353"/>
    <property type="project" value="MGI"/>
</dbReference>
<dbReference type="CDD" id="cd01203">
    <property type="entry name" value="PTB_DOK1_DOK2_DOK3"/>
    <property type="match status" value="1"/>
</dbReference>
<dbReference type="DisProt" id="DP02873"/>
<dbReference type="FunFam" id="2.30.29.30:FF:000246">
    <property type="entry name" value="Docking protein 1"/>
    <property type="match status" value="1"/>
</dbReference>
<dbReference type="Gene3D" id="2.30.29.30">
    <property type="entry name" value="Pleckstrin-homology domain (PH domain)/Phosphotyrosine-binding domain (PTB)"/>
    <property type="match status" value="2"/>
</dbReference>
<dbReference type="IDEAL" id="IID50286"/>
<dbReference type="InterPro" id="IPR050996">
    <property type="entry name" value="Docking_Protein_DOK"/>
</dbReference>
<dbReference type="InterPro" id="IPR037751">
    <property type="entry name" value="Dok1/2/3_PTB"/>
</dbReference>
<dbReference type="InterPro" id="IPR002404">
    <property type="entry name" value="IRS_PTB"/>
</dbReference>
<dbReference type="InterPro" id="IPR011993">
    <property type="entry name" value="PH-like_dom_sf"/>
</dbReference>
<dbReference type="InterPro" id="IPR001849">
    <property type="entry name" value="PH_domain"/>
</dbReference>
<dbReference type="PANTHER" id="PTHR21258:SF46">
    <property type="entry name" value="DOCKING PROTEIN 1"/>
    <property type="match status" value="1"/>
</dbReference>
<dbReference type="PANTHER" id="PTHR21258">
    <property type="entry name" value="DOCKING PROTEIN RELATED"/>
    <property type="match status" value="1"/>
</dbReference>
<dbReference type="Pfam" id="PF02174">
    <property type="entry name" value="IRS"/>
    <property type="match status" value="1"/>
</dbReference>
<dbReference type="Pfam" id="PF00169">
    <property type="entry name" value="PH"/>
    <property type="match status" value="1"/>
</dbReference>
<dbReference type="SMART" id="SM01244">
    <property type="entry name" value="IRS"/>
    <property type="match status" value="1"/>
</dbReference>
<dbReference type="SMART" id="SM00233">
    <property type="entry name" value="PH"/>
    <property type="match status" value="1"/>
</dbReference>
<dbReference type="SMART" id="SM00310">
    <property type="entry name" value="PTBI"/>
    <property type="match status" value="1"/>
</dbReference>
<dbReference type="SUPFAM" id="SSF50729">
    <property type="entry name" value="PH domain-like"/>
    <property type="match status" value="2"/>
</dbReference>
<dbReference type="PROSITE" id="PS51064">
    <property type="entry name" value="IRS_PTB"/>
    <property type="match status" value="1"/>
</dbReference>
<keyword id="KW-0002">3D-structure</keyword>
<keyword id="KW-0007">Acetylation</keyword>
<keyword id="KW-0963">Cytoplasm</keyword>
<keyword id="KW-0903">Direct protein sequencing</keyword>
<keyword id="KW-0539">Nucleus</keyword>
<keyword id="KW-0597">Phosphoprotein</keyword>
<keyword id="KW-1185">Reference proteome</keyword>
<name>DOK1_MOUSE</name>
<comment type="function">
    <text evidence="1">DOK proteins are enzymatically inert adaptor or scaffolding proteins. They provide a docking platform for the assembly of multimolecular signaling complexes. DOK1 appears to be a negative regulator of the insulin signaling pathway. Modulates integrin activation by competing with talin for the same binding site on ITGB3 (By similarity).</text>
</comment>
<comment type="subunit">
    <text evidence="1">Interacts with RasGAP, INPP5D/SHIP1 and ABL1. Interacts directly with phosphorylated ITGB3 (By similarity). Interacts with SRMS (via the SH2 and SH3 domains) (By similarity).</text>
</comment>
<comment type="interaction">
    <interactant intactId="EBI-914917">
        <id>P97465</id>
    </interactant>
    <interactant intactId="EBI-914519">
        <id>P00520</id>
        <label>Abl1</label>
    </interactant>
    <organismsDiffer>false</organismsDiffer>
    <experiments>4</experiments>
</comment>
<comment type="interaction">
    <interactant intactId="EBI-914917">
        <id>P97465</id>
    </interactant>
    <interactant intactId="EBI-642202">
        <id>Q99M51</id>
        <label>Nck1</label>
    </interactant>
    <organismsDiffer>false</organismsDiffer>
    <experiments>5</experiments>
</comment>
<comment type="subcellular location">
    <subcellularLocation>
        <location evidence="1">Cytoplasm</location>
    </subcellularLocation>
    <subcellularLocation>
        <location evidence="1">Nucleus</location>
    </subcellularLocation>
</comment>
<comment type="tissue specificity">
    <text>Expressed in lung, spleen, skeletal muscle and kidney.</text>
</comment>
<comment type="domain">
    <text>PTB domain mediates receptor interaction.</text>
</comment>
<comment type="PTM">
    <text evidence="1">Constitutively tyrosine-phosphorylated. Phosphorylated by TEC. Phosphorylated on tyrosine residues by the insulin receptor kinase. Results in the negative regulation of the insulin signaling pathway (By similarity). Phosphorylated by LYN. Phosphorylated on tyrosine residues by SRMS (By similarity).</text>
</comment>
<comment type="disruption phenotype">
    <text evidence="5">No visible phenotype. Mice appear healthy and are fertile.</text>
</comment>
<comment type="similarity">
    <text evidence="6">Belongs to the DOK family. Type A subfamily.</text>
</comment>
<evidence type="ECO:0000250" key="1"/>
<evidence type="ECO:0000250" key="2">
    <source>
        <dbReference type="UniProtKB" id="Q99704"/>
    </source>
</evidence>
<evidence type="ECO:0000255" key="3">
    <source>
        <dbReference type="PROSITE-ProRule" id="PRU00389"/>
    </source>
</evidence>
<evidence type="ECO:0000256" key="4">
    <source>
        <dbReference type="SAM" id="MobiDB-lite"/>
    </source>
</evidence>
<evidence type="ECO:0000269" key="5">
    <source>
    </source>
</evidence>
<evidence type="ECO:0000305" key="6"/>
<evidence type="ECO:0007744" key="7">
    <source>
    </source>
</evidence>
<evidence type="ECO:0007744" key="8">
    <source>
    </source>
</evidence>
<evidence type="ECO:0007744" key="9">
    <source>
    </source>
</evidence>
<evidence type="ECO:0007744" key="10">
    <source>
    </source>
</evidence>
<evidence type="ECO:0007744" key="11">
    <source>
    </source>
</evidence>
<evidence type="ECO:0007829" key="12">
    <source>
        <dbReference type="PDB" id="1P5T"/>
    </source>
</evidence>
<sequence length="482" mass="52452">MDGAVMEGPLFLQSQRFGTKRWRKTWAVLYPASPHGVARLEFFDHKGSSSRGGRGGSRRLDCKMIRLAECVSVVPVTVESPPEPGAVAFRLDTAQRSHLLAADAVSSTAWVQTLCRTAFPKGGWALAQTENQPKFSALEMLENSLYSPTWEGSQFWVTSQKTEASERCGLQGSYILRVEAEKLTLLTLGAQSQILEPLLFWPYTLLRRYGRDKVMFSFEAGRRCPSGPGTFTFQTSQGNDIFQAVEAAIQQQKAQGKVGQAQDILRTDSHDGETEGKTVPPPVPQDPLGSPPALYAEPLDSLRIPPGPSQDSVYSDPLGSTPAGAGEGVHSKKPLYWDLYGHVQQQLLKTKLTDSKEDPIYDEPEGLAPAPPRGLYDLPQEPRDAWWCQARLKEEGYELPYNPATDDYAVPPPRSPKPAPAPKPQGLILPESGTTRGSGSKGFSSDTALYSQVQKSGTSGAWDCGLSKVGNDRAGVKSEGST</sequence>
<accession>P97465</accession>
<accession>Q9R213</accession>
<protein>
    <recommendedName>
        <fullName>Docking protein 1</fullName>
    </recommendedName>
    <alternativeName>
        <fullName>Downstream of tyrosine kinase 1</fullName>
    </alternativeName>
    <alternativeName>
        <fullName>p62(dok)</fullName>
    </alternativeName>
</protein>
<gene>
    <name type="primary">Dok1</name>
    <name type="synonym">Dok</name>
</gene>
<organism>
    <name type="scientific">Mus musculus</name>
    <name type="common">Mouse</name>
    <dbReference type="NCBI Taxonomy" id="10090"/>
    <lineage>
        <taxon>Eukaryota</taxon>
        <taxon>Metazoa</taxon>
        <taxon>Chordata</taxon>
        <taxon>Craniata</taxon>
        <taxon>Vertebrata</taxon>
        <taxon>Euteleostomi</taxon>
        <taxon>Mammalia</taxon>
        <taxon>Eutheria</taxon>
        <taxon>Euarchontoglires</taxon>
        <taxon>Glires</taxon>
        <taxon>Rodentia</taxon>
        <taxon>Myomorpha</taxon>
        <taxon>Muroidea</taxon>
        <taxon>Muridae</taxon>
        <taxon>Murinae</taxon>
        <taxon>Mus</taxon>
        <taxon>Mus</taxon>
    </lineage>
</organism>
<proteinExistence type="evidence at protein level"/>